<proteinExistence type="inferred from homology"/>
<accession>Q7V501</accession>
<evidence type="ECO:0000255" key="1">
    <source>
        <dbReference type="HAMAP-Rule" id="MF_00054"/>
    </source>
</evidence>
<sequence>MARAFPLERVRNIGIAAHIDAGKTTCTERILFYSGVVHKMGEVHDGAAVTDWMAQERERGITITAAAISTTWNDHRINIIDTPGHVDFTIEVERSMRVLDGVIAVFCAVGGVQPQSETVWRQADRYSVPRMVFVNKMDRTGADFLKVHGQIKNRLKANAIPIQLPIGAEGDLSGIIDLVKNKAFIYKDDLGKEIEETEIPDHMKEIAAEWRSKLMECVAETDEELIEVFLETEELSEAQLASGIREGVLNHGLVPLLCGSAFKNKGVQLLLDAVVDYLPAPVDVPPIQGLLPNGKEAVRPSDDNAPFSALAFKVMSDPYGKLTFVRMYSGVLEKGSYVLNSTKNEKERISRLIILKADDREEVDALRAGDLGAVLGLKNTTTGDTLCTTDDPIVLETLYIPEPVISVAVEPKTKGDMEKLSKALLSLAEEDPTFRVSTDPETSQTVIAGMGELHLEILVDRMLREFKVEANIGAPQVSYRETIRASSKGEGKFARQTGGKGQYGHVVIEMEPGEPGSGFEFVNKIVGGIVPKEYIKPAESGMRETCESGVIAGYPLIDVKVTMVDGSYHDVDSSEMAFKIAGSMAFKDGVKKCNPVLLEPMMKVEVEIPEDFLGAIIGDLSSRRGQVEGQSIDDGLSKVQSKVPLAEMFGYATQLRSMTQGRGIFSMEFSHYEEVPRNVAEAIISKNQGNS</sequence>
<name>EFG_PROMM</name>
<gene>
    <name evidence="1" type="primary">fusA</name>
    <name type="ordered locus">PMT_1781</name>
</gene>
<comment type="function">
    <text evidence="1">Catalyzes the GTP-dependent ribosomal translocation step during translation elongation. During this step, the ribosome changes from the pre-translocational (PRE) to the post-translocational (POST) state as the newly formed A-site-bound peptidyl-tRNA and P-site-bound deacylated tRNA move to the P and E sites, respectively. Catalyzes the coordinated movement of the two tRNA molecules, the mRNA and conformational changes in the ribosome.</text>
</comment>
<comment type="subcellular location">
    <subcellularLocation>
        <location evidence="1">Cytoplasm</location>
    </subcellularLocation>
</comment>
<comment type="similarity">
    <text evidence="1">Belongs to the TRAFAC class translation factor GTPase superfamily. Classic translation factor GTPase family. EF-G/EF-2 subfamily.</text>
</comment>
<feature type="chain" id="PRO_0000091182" description="Elongation factor G">
    <location>
        <begin position="1"/>
        <end position="691"/>
    </location>
</feature>
<feature type="domain" description="tr-type G">
    <location>
        <begin position="8"/>
        <end position="282"/>
    </location>
</feature>
<feature type="binding site" evidence="1">
    <location>
        <begin position="17"/>
        <end position="24"/>
    </location>
    <ligand>
        <name>GTP</name>
        <dbReference type="ChEBI" id="CHEBI:37565"/>
    </ligand>
</feature>
<feature type="binding site" evidence="1">
    <location>
        <begin position="81"/>
        <end position="85"/>
    </location>
    <ligand>
        <name>GTP</name>
        <dbReference type="ChEBI" id="CHEBI:37565"/>
    </ligand>
</feature>
<feature type="binding site" evidence="1">
    <location>
        <begin position="135"/>
        <end position="138"/>
    </location>
    <ligand>
        <name>GTP</name>
        <dbReference type="ChEBI" id="CHEBI:37565"/>
    </ligand>
</feature>
<reference key="1">
    <citation type="journal article" date="2003" name="Nature">
        <title>Genome divergence in two Prochlorococcus ecotypes reflects oceanic niche differentiation.</title>
        <authorList>
            <person name="Rocap G."/>
            <person name="Larimer F.W."/>
            <person name="Lamerdin J.E."/>
            <person name="Malfatti S."/>
            <person name="Chain P."/>
            <person name="Ahlgren N.A."/>
            <person name="Arellano A."/>
            <person name="Coleman M."/>
            <person name="Hauser L."/>
            <person name="Hess W.R."/>
            <person name="Johnson Z.I."/>
            <person name="Land M.L."/>
            <person name="Lindell D."/>
            <person name="Post A.F."/>
            <person name="Regala W."/>
            <person name="Shah M."/>
            <person name="Shaw S.L."/>
            <person name="Steglich C."/>
            <person name="Sullivan M.B."/>
            <person name="Ting C.S."/>
            <person name="Tolonen A."/>
            <person name="Webb E.A."/>
            <person name="Zinser E.R."/>
            <person name="Chisholm S.W."/>
        </authorList>
    </citation>
    <scope>NUCLEOTIDE SEQUENCE [LARGE SCALE GENOMIC DNA]</scope>
    <source>
        <strain>MIT 9313</strain>
    </source>
</reference>
<organism>
    <name type="scientific">Prochlorococcus marinus (strain MIT 9313)</name>
    <dbReference type="NCBI Taxonomy" id="74547"/>
    <lineage>
        <taxon>Bacteria</taxon>
        <taxon>Bacillati</taxon>
        <taxon>Cyanobacteriota</taxon>
        <taxon>Cyanophyceae</taxon>
        <taxon>Synechococcales</taxon>
        <taxon>Prochlorococcaceae</taxon>
        <taxon>Prochlorococcus</taxon>
    </lineage>
</organism>
<keyword id="KW-0963">Cytoplasm</keyword>
<keyword id="KW-0251">Elongation factor</keyword>
<keyword id="KW-0342">GTP-binding</keyword>
<keyword id="KW-0547">Nucleotide-binding</keyword>
<keyword id="KW-0648">Protein biosynthesis</keyword>
<keyword id="KW-1185">Reference proteome</keyword>
<dbReference type="EMBL" id="BX548175">
    <property type="protein sequence ID" value="CAE21956.1"/>
    <property type="molecule type" value="Genomic_DNA"/>
</dbReference>
<dbReference type="RefSeq" id="WP_011131148.1">
    <property type="nucleotide sequence ID" value="NC_005071.1"/>
</dbReference>
<dbReference type="SMR" id="Q7V501"/>
<dbReference type="KEGG" id="pmt:PMT_1781"/>
<dbReference type="eggNOG" id="COG0480">
    <property type="taxonomic scope" value="Bacteria"/>
</dbReference>
<dbReference type="HOGENOM" id="CLU_002794_4_1_3"/>
<dbReference type="OrthoDB" id="580826at2"/>
<dbReference type="Proteomes" id="UP000001423">
    <property type="component" value="Chromosome"/>
</dbReference>
<dbReference type="GO" id="GO:0005737">
    <property type="term" value="C:cytoplasm"/>
    <property type="evidence" value="ECO:0007669"/>
    <property type="project" value="UniProtKB-SubCell"/>
</dbReference>
<dbReference type="GO" id="GO:0005525">
    <property type="term" value="F:GTP binding"/>
    <property type="evidence" value="ECO:0007669"/>
    <property type="project" value="UniProtKB-UniRule"/>
</dbReference>
<dbReference type="GO" id="GO:0003924">
    <property type="term" value="F:GTPase activity"/>
    <property type="evidence" value="ECO:0007669"/>
    <property type="project" value="InterPro"/>
</dbReference>
<dbReference type="GO" id="GO:0003746">
    <property type="term" value="F:translation elongation factor activity"/>
    <property type="evidence" value="ECO:0007669"/>
    <property type="project" value="UniProtKB-UniRule"/>
</dbReference>
<dbReference type="GO" id="GO:0032790">
    <property type="term" value="P:ribosome disassembly"/>
    <property type="evidence" value="ECO:0007669"/>
    <property type="project" value="TreeGrafter"/>
</dbReference>
<dbReference type="CDD" id="cd01886">
    <property type="entry name" value="EF-G"/>
    <property type="match status" value="1"/>
</dbReference>
<dbReference type="CDD" id="cd16262">
    <property type="entry name" value="EFG_III"/>
    <property type="match status" value="1"/>
</dbReference>
<dbReference type="CDD" id="cd01434">
    <property type="entry name" value="EFG_mtEFG1_IV"/>
    <property type="match status" value="1"/>
</dbReference>
<dbReference type="CDD" id="cd03713">
    <property type="entry name" value="EFG_mtEFG_C"/>
    <property type="match status" value="1"/>
</dbReference>
<dbReference type="CDD" id="cd04088">
    <property type="entry name" value="EFG_mtEFG_II"/>
    <property type="match status" value="1"/>
</dbReference>
<dbReference type="FunFam" id="2.40.30.10:FF:000006">
    <property type="entry name" value="Elongation factor G"/>
    <property type="match status" value="1"/>
</dbReference>
<dbReference type="FunFam" id="3.30.230.10:FF:000003">
    <property type="entry name" value="Elongation factor G"/>
    <property type="match status" value="1"/>
</dbReference>
<dbReference type="FunFam" id="3.30.70.240:FF:000001">
    <property type="entry name" value="Elongation factor G"/>
    <property type="match status" value="1"/>
</dbReference>
<dbReference type="FunFam" id="3.30.70.870:FF:000001">
    <property type="entry name" value="Elongation factor G"/>
    <property type="match status" value="1"/>
</dbReference>
<dbReference type="FunFam" id="3.40.50.300:FF:000029">
    <property type="entry name" value="Elongation factor G"/>
    <property type="match status" value="1"/>
</dbReference>
<dbReference type="Gene3D" id="3.30.230.10">
    <property type="match status" value="1"/>
</dbReference>
<dbReference type="Gene3D" id="3.30.70.240">
    <property type="match status" value="1"/>
</dbReference>
<dbReference type="Gene3D" id="3.30.70.870">
    <property type="entry name" value="Elongation Factor G (Translational Gtpase), domain 3"/>
    <property type="match status" value="1"/>
</dbReference>
<dbReference type="Gene3D" id="3.40.50.300">
    <property type="entry name" value="P-loop containing nucleotide triphosphate hydrolases"/>
    <property type="match status" value="1"/>
</dbReference>
<dbReference type="Gene3D" id="2.40.30.10">
    <property type="entry name" value="Translation factors"/>
    <property type="match status" value="1"/>
</dbReference>
<dbReference type="HAMAP" id="MF_00054_B">
    <property type="entry name" value="EF_G_EF_2_B"/>
    <property type="match status" value="1"/>
</dbReference>
<dbReference type="InterPro" id="IPR041095">
    <property type="entry name" value="EFG_II"/>
</dbReference>
<dbReference type="InterPro" id="IPR009022">
    <property type="entry name" value="EFG_III"/>
</dbReference>
<dbReference type="InterPro" id="IPR035647">
    <property type="entry name" value="EFG_III/V"/>
</dbReference>
<dbReference type="InterPro" id="IPR047872">
    <property type="entry name" value="EFG_IV"/>
</dbReference>
<dbReference type="InterPro" id="IPR035649">
    <property type="entry name" value="EFG_V"/>
</dbReference>
<dbReference type="InterPro" id="IPR000640">
    <property type="entry name" value="EFG_V-like"/>
</dbReference>
<dbReference type="InterPro" id="IPR004161">
    <property type="entry name" value="EFTu-like_2"/>
</dbReference>
<dbReference type="InterPro" id="IPR031157">
    <property type="entry name" value="G_TR_CS"/>
</dbReference>
<dbReference type="InterPro" id="IPR027417">
    <property type="entry name" value="P-loop_NTPase"/>
</dbReference>
<dbReference type="InterPro" id="IPR020568">
    <property type="entry name" value="Ribosomal_Su5_D2-typ_SF"/>
</dbReference>
<dbReference type="InterPro" id="IPR014721">
    <property type="entry name" value="Ribsml_uS5_D2-typ_fold_subgr"/>
</dbReference>
<dbReference type="InterPro" id="IPR005225">
    <property type="entry name" value="Small_GTP-bd"/>
</dbReference>
<dbReference type="InterPro" id="IPR000795">
    <property type="entry name" value="T_Tr_GTP-bd_dom"/>
</dbReference>
<dbReference type="InterPro" id="IPR009000">
    <property type="entry name" value="Transl_B-barrel_sf"/>
</dbReference>
<dbReference type="InterPro" id="IPR004540">
    <property type="entry name" value="Transl_elong_EFG/EF2"/>
</dbReference>
<dbReference type="InterPro" id="IPR005517">
    <property type="entry name" value="Transl_elong_EFG/EF2_IV"/>
</dbReference>
<dbReference type="NCBIfam" id="TIGR00484">
    <property type="entry name" value="EF-G"/>
    <property type="match status" value="1"/>
</dbReference>
<dbReference type="NCBIfam" id="NF009379">
    <property type="entry name" value="PRK12740.1-3"/>
    <property type="match status" value="1"/>
</dbReference>
<dbReference type="NCBIfam" id="NF009381">
    <property type="entry name" value="PRK12740.1-5"/>
    <property type="match status" value="1"/>
</dbReference>
<dbReference type="NCBIfam" id="NF009891">
    <property type="entry name" value="PRK13351.1-1"/>
    <property type="match status" value="1"/>
</dbReference>
<dbReference type="NCBIfam" id="TIGR00231">
    <property type="entry name" value="small_GTP"/>
    <property type="match status" value="1"/>
</dbReference>
<dbReference type="PANTHER" id="PTHR43261:SF1">
    <property type="entry name" value="RIBOSOME-RELEASING FACTOR 2, MITOCHONDRIAL"/>
    <property type="match status" value="1"/>
</dbReference>
<dbReference type="PANTHER" id="PTHR43261">
    <property type="entry name" value="TRANSLATION ELONGATION FACTOR G-RELATED"/>
    <property type="match status" value="1"/>
</dbReference>
<dbReference type="Pfam" id="PF00679">
    <property type="entry name" value="EFG_C"/>
    <property type="match status" value="1"/>
</dbReference>
<dbReference type="Pfam" id="PF14492">
    <property type="entry name" value="EFG_III"/>
    <property type="match status" value="1"/>
</dbReference>
<dbReference type="Pfam" id="PF03764">
    <property type="entry name" value="EFG_IV"/>
    <property type="match status" value="1"/>
</dbReference>
<dbReference type="Pfam" id="PF00009">
    <property type="entry name" value="GTP_EFTU"/>
    <property type="match status" value="1"/>
</dbReference>
<dbReference type="Pfam" id="PF03144">
    <property type="entry name" value="GTP_EFTU_D2"/>
    <property type="match status" value="1"/>
</dbReference>
<dbReference type="PRINTS" id="PR00315">
    <property type="entry name" value="ELONGATNFCT"/>
</dbReference>
<dbReference type="SMART" id="SM00838">
    <property type="entry name" value="EFG_C"/>
    <property type="match status" value="1"/>
</dbReference>
<dbReference type="SMART" id="SM00889">
    <property type="entry name" value="EFG_IV"/>
    <property type="match status" value="1"/>
</dbReference>
<dbReference type="SUPFAM" id="SSF54980">
    <property type="entry name" value="EF-G C-terminal domain-like"/>
    <property type="match status" value="2"/>
</dbReference>
<dbReference type="SUPFAM" id="SSF52540">
    <property type="entry name" value="P-loop containing nucleoside triphosphate hydrolases"/>
    <property type="match status" value="1"/>
</dbReference>
<dbReference type="SUPFAM" id="SSF54211">
    <property type="entry name" value="Ribosomal protein S5 domain 2-like"/>
    <property type="match status" value="1"/>
</dbReference>
<dbReference type="SUPFAM" id="SSF50447">
    <property type="entry name" value="Translation proteins"/>
    <property type="match status" value="1"/>
</dbReference>
<dbReference type="PROSITE" id="PS00301">
    <property type="entry name" value="G_TR_1"/>
    <property type="match status" value="1"/>
</dbReference>
<dbReference type="PROSITE" id="PS51722">
    <property type="entry name" value="G_TR_2"/>
    <property type="match status" value="1"/>
</dbReference>
<protein>
    <recommendedName>
        <fullName evidence="1">Elongation factor G</fullName>
        <shortName evidence="1">EF-G</shortName>
    </recommendedName>
</protein>